<gene>
    <name evidence="1" type="primary">hcaE</name>
    <name type="ordered locus">plu2204</name>
</gene>
<keyword id="KW-0001">2Fe-2S</keyword>
<keyword id="KW-0058">Aromatic hydrocarbons catabolism</keyword>
<keyword id="KW-0223">Dioxygenase</keyword>
<keyword id="KW-0408">Iron</keyword>
<keyword id="KW-0411">Iron-sulfur</keyword>
<keyword id="KW-0479">Metal-binding</keyword>
<keyword id="KW-0520">NAD</keyword>
<keyword id="KW-0560">Oxidoreductase</keyword>
<keyword id="KW-1185">Reference proteome</keyword>
<comment type="function">
    <text evidence="1">Part of the multicomponent 3-phenylpropionate dioxygenase. Converts 3-phenylpropionic acid (PP) and cinnamic acid (CI) into 3-phenylpropionate-dihydrodiol (PP-dihydrodiol) and cinnamic acid-dihydrodiol (CI-dihydrodiol), respectively.</text>
</comment>
<comment type="catalytic activity">
    <reaction evidence="1">
        <text>3-phenylpropanoate + NADH + O2 + H(+) = 3-(cis-5,6-dihydroxycyclohexa-1,3-dien-1-yl)propanoate + NAD(+)</text>
        <dbReference type="Rhea" id="RHEA:20357"/>
        <dbReference type="ChEBI" id="CHEBI:15378"/>
        <dbReference type="ChEBI" id="CHEBI:15379"/>
        <dbReference type="ChEBI" id="CHEBI:51057"/>
        <dbReference type="ChEBI" id="CHEBI:57540"/>
        <dbReference type="ChEBI" id="CHEBI:57945"/>
        <dbReference type="ChEBI" id="CHEBI:60087"/>
        <dbReference type="EC" id="1.14.12.19"/>
    </reaction>
</comment>
<comment type="catalytic activity">
    <reaction evidence="1">
        <text>(E)-cinnamate + NADH + O2 + H(+) = (2E)-3-(cis-5,6-dihydroxycyclohexa-1,3-dien-1-yl)prop-2-enoate + NAD(+)</text>
        <dbReference type="Rhea" id="RHEA:25058"/>
        <dbReference type="ChEBI" id="CHEBI:15378"/>
        <dbReference type="ChEBI" id="CHEBI:15379"/>
        <dbReference type="ChEBI" id="CHEBI:15669"/>
        <dbReference type="ChEBI" id="CHEBI:57540"/>
        <dbReference type="ChEBI" id="CHEBI:57945"/>
        <dbReference type="ChEBI" id="CHEBI:61451"/>
        <dbReference type="EC" id="1.14.12.19"/>
    </reaction>
</comment>
<comment type="cofactor">
    <cofactor evidence="1">
        <name>Fe cation</name>
        <dbReference type="ChEBI" id="CHEBI:24875"/>
    </cofactor>
    <text evidence="1">Binds 1 Fe cation.</text>
</comment>
<comment type="cofactor">
    <cofactor evidence="1">
        <name>[2Fe-2S] cluster</name>
        <dbReference type="ChEBI" id="CHEBI:190135"/>
    </cofactor>
    <text evidence="1">Binds 1 [2Fe-2S] cluster per subunit.</text>
</comment>
<comment type="pathway">
    <text evidence="1">Aromatic compound metabolism; 3-phenylpropanoate degradation.</text>
</comment>
<comment type="subunit">
    <text evidence="1">This dioxygenase system consists of four proteins: the two subunits of the hydroxylase component (HcaE and HcaF), a ferredoxin (HcaC) and a ferredoxin reductase (HcaD).</text>
</comment>
<comment type="similarity">
    <text evidence="1">Belongs to the bacterial ring-hydroxylating dioxygenase alpha subunit family.</text>
</comment>
<reference key="1">
    <citation type="journal article" date="2003" name="Nat. Biotechnol.">
        <title>The genome sequence of the entomopathogenic bacterium Photorhabdus luminescens.</title>
        <authorList>
            <person name="Duchaud E."/>
            <person name="Rusniok C."/>
            <person name="Frangeul L."/>
            <person name="Buchrieser C."/>
            <person name="Givaudan A."/>
            <person name="Taourit S."/>
            <person name="Bocs S."/>
            <person name="Boursaux-Eude C."/>
            <person name="Chandler M."/>
            <person name="Charles J.-F."/>
            <person name="Dassa E."/>
            <person name="Derose R."/>
            <person name="Derzelle S."/>
            <person name="Freyssinet G."/>
            <person name="Gaudriault S."/>
            <person name="Medigue C."/>
            <person name="Lanois A."/>
            <person name="Powell K."/>
            <person name="Siguier P."/>
            <person name="Vincent R."/>
            <person name="Wingate V."/>
            <person name="Zouine M."/>
            <person name="Glaser P."/>
            <person name="Boemare N."/>
            <person name="Danchin A."/>
            <person name="Kunst F."/>
        </authorList>
    </citation>
    <scope>NUCLEOTIDE SEQUENCE [LARGE SCALE GENOMIC DNA]</scope>
    <source>
        <strain>DSM 15139 / CIP 105565 / TT01</strain>
    </source>
</reference>
<sequence>MTLSKDSDIYRLIDARAGRVTPQIYIDPELYQLELERIFGRCWLFLAHQSQIPNPGDFFNTYMGEDSVVVVRQKNGSVKAFLNQCRHRSMRVCYADSGNTRAFTCPYHGWSYGVDGRLIDVPLEACAYPHGLCKEQWGLQEVPCVENYKGLIFGNWDTTAPSLIDYLGDMAWYLDGVLDRREGGTEVIGGVQKWLINCNWKLPAEQFAGDQYHALFSHASAVQVLSVKDGDDKKALGADQTSRPVWETAKDAVQFAQNGHGCGFFLTEKPDANVWVDGAVARYYRETYAEAEQRLGKVRALRLAGHNNIFPTLSWLNGTATMRVWHPRGPDQVEVWAFCIADKAASPEVKAAFENSATRAFGPAGFLEQDDSENWVEIQKVLRGYKARNSTLCMEMRLGQERVRDDGIPGVTNYVFSETVARGMYQRWADLLTSETWDEIEEKSRVYQQELVK</sequence>
<organism>
    <name type="scientific">Photorhabdus laumondii subsp. laumondii (strain DSM 15139 / CIP 105565 / TT01)</name>
    <name type="common">Photorhabdus luminescens subsp. laumondii</name>
    <dbReference type="NCBI Taxonomy" id="243265"/>
    <lineage>
        <taxon>Bacteria</taxon>
        <taxon>Pseudomonadati</taxon>
        <taxon>Pseudomonadota</taxon>
        <taxon>Gammaproteobacteria</taxon>
        <taxon>Enterobacterales</taxon>
        <taxon>Morganellaceae</taxon>
        <taxon>Photorhabdus</taxon>
    </lineage>
</organism>
<accession>Q7N4W0</accession>
<protein>
    <recommendedName>
        <fullName evidence="1">3-phenylpropionate/cinnamic acid dioxygenase subunit alpha</fullName>
        <ecNumber evidence="1">1.14.12.19</ecNumber>
    </recommendedName>
</protein>
<name>HCAE_PHOLL</name>
<feature type="chain" id="PRO_0000333705" description="3-phenylpropionate/cinnamic acid dioxygenase subunit alpha">
    <location>
        <begin position="1"/>
        <end position="453"/>
    </location>
</feature>
<feature type="domain" description="Rieske" evidence="1">
    <location>
        <begin position="43"/>
        <end position="141"/>
    </location>
</feature>
<feature type="binding site" evidence="1">
    <location>
        <position position="85"/>
    </location>
    <ligand>
        <name>[2Fe-2S] cluster</name>
        <dbReference type="ChEBI" id="CHEBI:190135"/>
    </ligand>
</feature>
<feature type="binding site" evidence="1">
    <location>
        <position position="87"/>
    </location>
    <ligand>
        <name>[2Fe-2S] cluster</name>
        <dbReference type="ChEBI" id="CHEBI:190135"/>
    </ligand>
</feature>
<feature type="binding site" evidence="1">
    <location>
        <position position="105"/>
    </location>
    <ligand>
        <name>[2Fe-2S] cluster</name>
        <dbReference type="ChEBI" id="CHEBI:190135"/>
    </ligand>
</feature>
<feature type="binding site" evidence="1">
    <location>
        <position position="108"/>
    </location>
    <ligand>
        <name>[2Fe-2S] cluster</name>
        <dbReference type="ChEBI" id="CHEBI:190135"/>
    </ligand>
</feature>
<feature type="binding site" evidence="1">
    <location>
        <position position="213"/>
    </location>
    <ligand>
        <name>Fe cation</name>
        <dbReference type="ChEBI" id="CHEBI:24875"/>
    </ligand>
</feature>
<feature type="binding site" evidence="1">
    <location>
        <position position="218"/>
    </location>
    <ligand>
        <name>Fe cation</name>
        <dbReference type="ChEBI" id="CHEBI:24875"/>
    </ligand>
</feature>
<evidence type="ECO:0000255" key="1">
    <source>
        <dbReference type="HAMAP-Rule" id="MF_01648"/>
    </source>
</evidence>
<dbReference type="EC" id="1.14.12.19" evidence="1"/>
<dbReference type="EMBL" id="BX571866">
    <property type="protein sequence ID" value="CAE14497.1"/>
    <property type="molecule type" value="Genomic_DNA"/>
</dbReference>
<dbReference type="RefSeq" id="WP_011146456.1">
    <property type="nucleotide sequence ID" value="NC_005126.1"/>
</dbReference>
<dbReference type="SMR" id="Q7N4W0"/>
<dbReference type="STRING" id="243265.plu2204"/>
<dbReference type="GeneID" id="48848480"/>
<dbReference type="KEGG" id="plu:plu2204"/>
<dbReference type="eggNOG" id="COG4638">
    <property type="taxonomic scope" value="Bacteria"/>
</dbReference>
<dbReference type="HOGENOM" id="CLU_026244_4_0_6"/>
<dbReference type="OrthoDB" id="9769355at2"/>
<dbReference type="UniPathway" id="UPA00714"/>
<dbReference type="Proteomes" id="UP000002514">
    <property type="component" value="Chromosome"/>
</dbReference>
<dbReference type="GO" id="GO:0051537">
    <property type="term" value="F:2 iron, 2 sulfur cluster binding"/>
    <property type="evidence" value="ECO:0007669"/>
    <property type="project" value="UniProtKB-KW"/>
</dbReference>
<dbReference type="GO" id="GO:0008695">
    <property type="term" value="F:3-phenylpropionate dioxygenase activity"/>
    <property type="evidence" value="ECO:0007669"/>
    <property type="project" value="UniProtKB-UniRule"/>
</dbReference>
<dbReference type="GO" id="GO:0005506">
    <property type="term" value="F:iron ion binding"/>
    <property type="evidence" value="ECO:0007669"/>
    <property type="project" value="UniProtKB-UniRule"/>
</dbReference>
<dbReference type="GO" id="GO:0019380">
    <property type="term" value="P:3-phenylpropionate catabolic process"/>
    <property type="evidence" value="ECO:0007669"/>
    <property type="project" value="UniProtKB-UniRule"/>
</dbReference>
<dbReference type="CDD" id="cd08881">
    <property type="entry name" value="RHO_alpha_C_NDO-like"/>
    <property type="match status" value="1"/>
</dbReference>
<dbReference type="FunFam" id="2.102.10.10:FF:000004">
    <property type="entry name" value="3-phenylpropionate/cinnamic acid dioxygenase subunit alpha"/>
    <property type="match status" value="1"/>
</dbReference>
<dbReference type="Gene3D" id="3.90.380.10">
    <property type="entry name" value="Naphthalene 1,2-dioxygenase Alpha Subunit, Chain A, domain 1"/>
    <property type="match status" value="1"/>
</dbReference>
<dbReference type="Gene3D" id="2.102.10.10">
    <property type="entry name" value="Rieske [2Fe-2S] iron-sulphur domain"/>
    <property type="match status" value="1"/>
</dbReference>
<dbReference type="HAMAP" id="MF_01648">
    <property type="entry name" value="HcaE"/>
    <property type="match status" value="1"/>
</dbReference>
<dbReference type="InterPro" id="IPR054883">
    <property type="entry name" value="3PPDioc_HcaE"/>
</dbReference>
<dbReference type="InterPro" id="IPR020875">
    <property type="entry name" value="HcaE"/>
</dbReference>
<dbReference type="InterPro" id="IPR043266">
    <property type="entry name" value="RHO_NdoB-like_C"/>
</dbReference>
<dbReference type="InterPro" id="IPR017941">
    <property type="entry name" value="Rieske_2Fe-2S"/>
</dbReference>
<dbReference type="InterPro" id="IPR036922">
    <property type="entry name" value="Rieske_2Fe-2S_sf"/>
</dbReference>
<dbReference type="InterPro" id="IPR015879">
    <property type="entry name" value="Ring_hydroxy_dOase_asu_C_dom"/>
</dbReference>
<dbReference type="InterPro" id="IPR001663">
    <property type="entry name" value="Rng_hydr_dOase-A"/>
</dbReference>
<dbReference type="NCBIfam" id="NF042946">
    <property type="entry name" value="3PPDioc_HcaE"/>
    <property type="match status" value="1"/>
</dbReference>
<dbReference type="PANTHER" id="PTHR43756:SF1">
    <property type="entry name" value="3-PHENYLPROPIONATE_CINNAMIC ACID DIOXYGENASE SUBUNIT ALPHA"/>
    <property type="match status" value="1"/>
</dbReference>
<dbReference type="PANTHER" id="PTHR43756">
    <property type="entry name" value="CHOLINE MONOOXYGENASE, CHLOROPLASTIC"/>
    <property type="match status" value="1"/>
</dbReference>
<dbReference type="Pfam" id="PF00355">
    <property type="entry name" value="Rieske"/>
    <property type="match status" value="1"/>
</dbReference>
<dbReference type="Pfam" id="PF00848">
    <property type="entry name" value="Ring_hydroxyl_A"/>
    <property type="match status" value="1"/>
</dbReference>
<dbReference type="PRINTS" id="PR00090">
    <property type="entry name" value="RNGDIOXGNASE"/>
</dbReference>
<dbReference type="SUPFAM" id="SSF55961">
    <property type="entry name" value="Bet v1-like"/>
    <property type="match status" value="1"/>
</dbReference>
<dbReference type="SUPFAM" id="SSF50022">
    <property type="entry name" value="ISP domain"/>
    <property type="match status" value="1"/>
</dbReference>
<dbReference type="PROSITE" id="PS51296">
    <property type="entry name" value="RIESKE"/>
    <property type="match status" value="1"/>
</dbReference>
<proteinExistence type="inferred from homology"/>